<feature type="chain" id="PRO_0000145326" description="DNA gyrase subunit B">
    <location>
        <begin position="1"/>
        <end position="815"/>
    </location>
</feature>
<feature type="domain" description="Toprim" evidence="1">
    <location>
        <begin position="430"/>
        <end position="545"/>
    </location>
</feature>
<feature type="region of interest" description="Disordered" evidence="2">
    <location>
        <begin position="1"/>
        <end position="21"/>
    </location>
</feature>
<feature type="binding site" evidence="1">
    <location>
        <position position="436"/>
    </location>
    <ligand>
        <name>Mg(2+)</name>
        <dbReference type="ChEBI" id="CHEBI:18420"/>
        <label>1</label>
        <note>catalytic</note>
    </ligand>
</feature>
<feature type="binding site" evidence="1">
    <location>
        <position position="509"/>
    </location>
    <ligand>
        <name>Mg(2+)</name>
        <dbReference type="ChEBI" id="CHEBI:18420"/>
        <label>1</label>
        <note>catalytic</note>
    </ligand>
</feature>
<feature type="binding site" evidence="1">
    <location>
        <position position="509"/>
    </location>
    <ligand>
        <name>Mg(2+)</name>
        <dbReference type="ChEBI" id="CHEBI:18420"/>
        <label>2</label>
    </ligand>
</feature>
<feature type="binding site" evidence="1">
    <location>
        <position position="511"/>
    </location>
    <ligand>
        <name>Mg(2+)</name>
        <dbReference type="ChEBI" id="CHEBI:18420"/>
        <label>2</label>
    </ligand>
</feature>
<feature type="site" description="Interaction with DNA" evidence="1">
    <location>
        <position position="461"/>
    </location>
</feature>
<feature type="site" description="Interaction with DNA" evidence="1">
    <location>
        <position position="464"/>
    </location>
</feature>
<accession>O33367</accession>
<comment type="function">
    <text evidence="1">A type II topoisomerase that negatively supercoils closed circular double-stranded (ds) DNA in an ATP-dependent manner to modulate DNA topology and maintain chromosomes in an underwound state. Negative supercoiling favors strand separation, and DNA replication, transcription, recombination and repair, all of which involve strand separation. Also able to catalyze the interconversion of other topological isomers of dsDNA rings, including catenanes and knotted rings. Type II topoisomerases break and join 2 DNA strands simultaneously in an ATP-dependent manner.</text>
</comment>
<comment type="catalytic activity">
    <reaction evidence="1">
        <text>ATP-dependent breakage, passage and rejoining of double-stranded DNA.</text>
        <dbReference type="EC" id="5.6.2.2"/>
    </reaction>
</comment>
<comment type="cofactor">
    <cofactor evidence="1">
        <name>Mg(2+)</name>
        <dbReference type="ChEBI" id="CHEBI:18420"/>
    </cofactor>
    <cofactor evidence="1">
        <name>Mn(2+)</name>
        <dbReference type="ChEBI" id="CHEBI:29035"/>
    </cofactor>
    <cofactor evidence="1">
        <name>Ca(2+)</name>
        <dbReference type="ChEBI" id="CHEBI:29108"/>
    </cofactor>
    <text evidence="1">Binds two Mg(2+) per subunit. The magnesium ions form salt bridges with both the protein and the DNA. Can also accept other divalent metal cations, such as Mn(2+) or Ca(2+).</text>
</comment>
<comment type="subunit">
    <text evidence="1">Heterotetramer, composed of two GyrA and two GyrB chains. In the heterotetramer, GyrA contains the active site tyrosine that forms a transient covalent intermediate with DNA, while GyrB binds cofactors and catalyzes ATP hydrolysis.</text>
</comment>
<comment type="subcellular location">
    <subcellularLocation>
        <location evidence="1">Cytoplasm</location>
    </subcellularLocation>
</comment>
<comment type="miscellaneous">
    <text evidence="1">Few gyrases are as efficient as E.coli at forming negative supercoils. Not all organisms have 2 type II topoisomerases; in organisms with a single type II topoisomerase this enzyme also has to decatenate newly replicated chromosomes.</text>
</comment>
<comment type="similarity">
    <text evidence="1">Belongs to the type II topoisomerase GyrB family.</text>
</comment>
<keyword id="KW-0067">ATP-binding</keyword>
<keyword id="KW-0963">Cytoplasm</keyword>
<keyword id="KW-0238">DNA-binding</keyword>
<keyword id="KW-0413">Isomerase</keyword>
<keyword id="KW-0460">Magnesium</keyword>
<keyword id="KW-0479">Metal-binding</keyword>
<keyword id="KW-0547">Nucleotide-binding</keyword>
<keyword id="KW-0799">Topoisomerase</keyword>
<reference key="1">
    <citation type="journal article" date="1998" name="Microbiology">
        <title>Molecular analysis of the DNA gyrB gene from Myxococcus xanthus.</title>
        <authorList>
            <person name="Paitan Y."/>
            <person name="Boulton N."/>
            <person name="Ron E.Z."/>
            <person name="Rosenberg E."/>
            <person name="Orr E."/>
        </authorList>
    </citation>
    <scope>NUCLEOTIDE SEQUENCE [GENOMIC DNA]</scope>
    <source>
        <strain>ER-15</strain>
    </source>
</reference>
<organism>
    <name type="scientific">Myxococcus xanthus</name>
    <dbReference type="NCBI Taxonomy" id="34"/>
    <lineage>
        <taxon>Bacteria</taxon>
        <taxon>Pseudomonadati</taxon>
        <taxon>Myxococcota</taxon>
        <taxon>Myxococcia</taxon>
        <taxon>Myxococcales</taxon>
        <taxon>Cystobacterineae</taxon>
        <taxon>Myxococcaceae</taxon>
        <taxon>Myxococcus</taxon>
    </lineage>
</organism>
<evidence type="ECO:0000255" key="1">
    <source>
        <dbReference type="HAMAP-Rule" id="MF_01898"/>
    </source>
</evidence>
<evidence type="ECO:0000256" key="2">
    <source>
        <dbReference type="SAM" id="MobiDB-lite"/>
    </source>
</evidence>
<name>GYRB_MYXXA</name>
<gene>
    <name evidence="1" type="primary">gyrB</name>
</gene>
<proteinExistence type="inferred from homology"/>
<dbReference type="EC" id="5.6.2.2" evidence="1"/>
<dbReference type="EMBL" id="AJ000543">
    <property type="protein sequence ID" value="CAA04176.1"/>
    <property type="molecule type" value="Genomic_DNA"/>
</dbReference>
<dbReference type="SMR" id="O33367"/>
<dbReference type="GO" id="GO:0005694">
    <property type="term" value="C:chromosome"/>
    <property type="evidence" value="ECO:0007669"/>
    <property type="project" value="InterPro"/>
</dbReference>
<dbReference type="GO" id="GO:0005737">
    <property type="term" value="C:cytoplasm"/>
    <property type="evidence" value="ECO:0007669"/>
    <property type="project" value="UniProtKB-SubCell"/>
</dbReference>
<dbReference type="GO" id="GO:0005524">
    <property type="term" value="F:ATP binding"/>
    <property type="evidence" value="ECO:0007669"/>
    <property type="project" value="UniProtKB-UniRule"/>
</dbReference>
<dbReference type="GO" id="GO:0003677">
    <property type="term" value="F:DNA binding"/>
    <property type="evidence" value="ECO:0007669"/>
    <property type="project" value="UniProtKB-KW"/>
</dbReference>
<dbReference type="GO" id="GO:0003918">
    <property type="term" value="F:DNA topoisomerase type II (double strand cut, ATP-hydrolyzing) activity"/>
    <property type="evidence" value="ECO:0007669"/>
    <property type="project" value="UniProtKB-UniRule"/>
</dbReference>
<dbReference type="GO" id="GO:0046872">
    <property type="term" value="F:metal ion binding"/>
    <property type="evidence" value="ECO:0007669"/>
    <property type="project" value="UniProtKB-KW"/>
</dbReference>
<dbReference type="GO" id="GO:0006265">
    <property type="term" value="P:DNA topological change"/>
    <property type="evidence" value="ECO:0007669"/>
    <property type="project" value="UniProtKB-UniRule"/>
</dbReference>
<dbReference type="GO" id="GO:0006261">
    <property type="term" value="P:DNA-templated DNA replication"/>
    <property type="evidence" value="ECO:0007669"/>
    <property type="project" value="UniProtKB-UniRule"/>
</dbReference>
<dbReference type="CDD" id="cd16928">
    <property type="entry name" value="HATPase_GyrB-like"/>
    <property type="match status" value="1"/>
</dbReference>
<dbReference type="CDD" id="cd00822">
    <property type="entry name" value="TopoII_Trans_DNA_gyrase"/>
    <property type="match status" value="1"/>
</dbReference>
<dbReference type="FunFam" id="3.30.230.10:FF:000005">
    <property type="entry name" value="DNA gyrase subunit B"/>
    <property type="match status" value="1"/>
</dbReference>
<dbReference type="FunFam" id="3.30.565.10:FF:000002">
    <property type="entry name" value="DNA gyrase subunit B"/>
    <property type="match status" value="1"/>
</dbReference>
<dbReference type="Gene3D" id="3.30.230.10">
    <property type="match status" value="1"/>
</dbReference>
<dbReference type="Gene3D" id="3.40.50.670">
    <property type="match status" value="2"/>
</dbReference>
<dbReference type="Gene3D" id="3.30.565.10">
    <property type="entry name" value="Histidine kinase-like ATPase, C-terminal domain"/>
    <property type="match status" value="1"/>
</dbReference>
<dbReference type="HAMAP" id="MF_01898">
    <property type="entry name" value="GyrB"/>
    <property type="match status" value="1"/>
</dbReference>
<dbReference type="InterPro" id="IPR002288">
    <property type="entry name" value="DNA_gyrase_B_C"/>
</dbReference>
<dbReference type="InterPro" id="IPR011557">
    <property type="entry name" value="GyrB"/>
</dbReference>
<dbReference type="InterPro" id="IPR036890">
    <property type="entry name" value="HATPase_C_sf"/>
</dbReference>
<dbReference type="InterPro" id="IPR020568">
    <property type="entry name" value="Ribosomal_Su5_D2-typ_SF"/>
</dbReference>
<dbReference type="InterPro" id="IPR014721">
    <property type="entry name" value="Ribsml_uS5_D2-typ_fold_subgr"/>
</dbReference>
<dbReference type="InterPro" id="IPR001241">
    <property type="entry name" value="Topo_IIA"/>
</dbReference>
<dbReference type="InterPro" id="IPR013760">
    <property type="entry name" value="Topo_IIA-like_dom_sf"/>
</dbReference>
<dbReference type="InterPro" id="IPR000565">
    <property type="entry name" value="Topo_IIA_B"/>
</dbReference>
<dbReference type="InterPro" id="IPR013759">
    <property type="entry name" value="Topo_IIA_B_C"/>
</dbReference>
<dbReference type="InterPro" id="IPR013506">
    <property type="entry name" value="Topo_IIA_bsu_dom2"/>
</dbReference>
<dbReference type="InterPro" id="IPR018522">
    <property type="entry name" value="TopoIIA_CS"/>
</dbReference>
<dbReference type="InterPro" id="IPR006171">
    <property type="entry name" value="TOPRIM_dom"/>
</dbReference>
<dbReference type="NCBIfam" id="NF004189">
    <property type="entry name" value="PRK05644.1"/>
    <property type="match status" value="1"/>
</dbReference>
<dbReference type="NCBIfam" id="NF011501">
    <property type="entry name" value="PRK14939.1"/>
    <property type="match status" value="1"/>
</dbReference>
<dbReference type="PANTHER" id="PTHR45866:SF1">
    <property type="entry name" value="DNA GYRASE SUBUNIT B, MITOCHONDRIAL"/>
    <property type="match status" value="1"/>
</dbReference>
<dbReference type="PANTHER" id="PTHR45866">
    <property type="entry name" value="DNA GYRASE/TOPOISOMERASE SUBUNIT B"/>
    <property type="match status" value="1"/>
</dbReference>
<dbReference type="Pfam" id="PF00204">
    <property type="entry name" value="DNA_gyraseB"/>
    <property type="match status" value="1"/>
</dbReference>
<dbReference type="Pfam" id="PF00986">
    <property type="entry name" value="DNA_gyraseB_C"/>
    <property type="match status" value="1"/>
</dbReference>
<dbReference type="Pfam" id="PF02518">
    <property type="entry name" value="HATPase_c"/>
    <property type="match status" value="1"/>
</dbReference>
<dbReference type="Pfam" id="PF01751">
    <property type="entry name" value="Toprim"/>
    <property type="match status" value="1"/>
</dbReference>
<dbReference type="PRINTS" id="PR01159">
    <property type="entry name" value="DNAGYRASEB"/>
</dbReference>
<dbReference type="PRINTS" id="PR00418">
    <property type="entry name" value="TPI2FAMILY"/>
</dbReference>
<dbReference type="SMART" id="SM00387">
    <property type="entry name" value="HATPase_c"/>
    <property type="match status" value="1"/>
</dbReference>
<dbReference type="SMART" id="SM00433">
    <property type="entry name" value="TOP2c"/>
    <property type="match status" value="1"/>
</dbReference>
<dbReference type="SUPFAM" id="SSF55874">
    <property type="entry name" value="ATPase domain of HSP90 chaperone/DNA topoisomerase II/histidine kinase"/>
    <property type="match status" value="1"/>
</dbReference>
<dbReference type="SUPFAM" id="SSF54211">
    <property type="entry name" value="Ribosomal protein S5 domain 2-like"/>
    <property type="match status" value="1"/>
</dbReference>
<dbReference type="SUPFAM" id="SSF56719">
    <property type="entry name" value="Type II DNA topoisomerase"/>
    <property type="match status" value="1"/>
</dbReference>
<dbReference type="PROSITE" id="PS00177">
    <property type="entry name" value="TOPOISOMERASE_II"/>
    <property type="match status" value="1"/>
</dbReference>
<dbReference type="PROSITE" id="PS50880">
    <property type="entry name" value="TOPRIM"/>
    <property type="match status" value="1"/>
</dbReference>
<protein>
    <recommendedName>
        <fullName evidence="1">DNA gyrase subunit B</fullName>
        <ecNumber evidence="1">5.6.2.2</ecNumber>
    </recommendedName>
</protein>
<sequence length="815" mass="89637">MEKTPATGSAVAPPPVEYGTDSITKLEGREAVRKRPGMYIGDTMAYGLHKLVYEVVDNAVDESLAGHCTDIEVVIHVDGSLSVQDNGRGIPVGPHPKFPGKDTLEVVLTELHAGSKFGNGAYKVSGGLHGVGVTCVNFLSEWFKVRVHRNGIVYEQAYAQGVPDTPPREVGTTDKRGTHIAFKPDATVMELVEFNFETLSQRLRELAFLNAGLHIVVRDERTNKEHDFKFDGGISSFVEYLNKSKQTLHDKPISFSTEREGVMLDIAMQWNDGYDERIYTFANNINTHEGGSHLSGFKAALTRTLNSYAEKGSLWKDLKETPTGEDAREGLSAVISVKLTNPQFEGQTKTKLGNSEVKGLVEQMVNDQLGSFLEETPMVAKKVVAKIGDACRARLAARKARETVRRKGVLDGGGLPGKLADCQIRDPNESELYIVEGDSAGGSAKQGRDRRNQAILPLRGKILNVEKLLREMLTSAEIVTLITALGNGIGAEDYDPEKARYHRIFLMTDADVDGSHIRTLLLTSSSGRCRSSCRRAISTSRSRRSYKVTRNKKDQYVKDEHALNEYLLKIASEHARVLTPGGELGGAELKALLEKVITYEERLEKQAKRRDARVVDALVQGARLSAETLTGRGCPGGGGEGRLMTPSSAACRTCWAACATSWCRTPSTTPRSWCSTPTRMEPCGRRCSTTPSCRRRSTWSCRLCAEHLRGAGQGAVQGPRGRGEITVFSVQEVLAAVRKDAQRGLGLQRYKGLGEMNPEQLWDTTMNPATRTLLQVRVEDAVESDEIFSLLMGEAVEPRREFIERNALDVQNLDI</sequence>